<name>PHYB_SORBI</name>
<gene>
    <name type="primary">PHYB</name>
    <name type="synonym">MA3</name>
    <name evidence="8" type="ORF">SORBI_3001G394400</name>
</gene>
<accession>P93527</accession>
<accession>Q6S527</accession>
<feature type="chain" id="PRO_0000171988" description="Phytochrome B">
    <location>
        <begin position="1"/>
        <end position="1178"/>
    </location>
</feature>
<feature type="domain" description="GAF" evidence="7">
    <location>
        <begin position="267"/>
        <end position="449"/>
    </location>
</feature>
<feature type="domain" description="PAS 1" evidence="3">
    <location>
        <begin position="668"/>
        <end position="739"/>
    </location>
</feature>
<feature type="domain" description="PAS 2" evidence="3">
    <location>
        <begin position="802"/>
        <end position="873"/>
    </location>
</feature>
<feature type="domain" description="Histidine kinase" evidence="2">
    <location>
        <begin position="950"/>
        <end position="1170"/>
    </location>
</feature>
<feature type="region of interest" description="Disordered" evidence="4">
    <location>
        <begin position="1"/>
        <end position="58"/>
    </location>
</feature>
<feature type="compositionally biased region" description="Polar residues" evidence="4">
    <location>
        <begin position="1"/>
        <end position="15"/>
    </location>
</feature>
<feature type="compositionally biased region" description="Basic residues" evidence="4">
    <location>
        <begin position="23"/>
        <end position="32"/>
    </location>
</feature>
<feature type="compositionally biased region" description="Gly residues" evidence="4">
    <location>
        <begin position="42"/>
        <end position="55"/>
    </location>
</feature>
<feature type="binding site" description="covalent" evidence="6 9">
    <location>
        <position position="372"/>
    </location>
    <ligand>
        <name>phytochromobilin</name>
        <dbReference type="ChEBI" id="CHEBI:189064"/>
    </ligand>
</feature>
<feature type="sequence conflict" description="In Ref. 1; AAB41398." ref="1">
    <original>K</original>
    <variation>E</variation>
    <location>
        <position position="990"/>
    </location>
</feature>
<feature type="sequence conflict" description="In Ref. 1; AAB41398." ref="1">
    <original>AC</original>
    <variation>TY</variation>
    <location>
        <begin position="1107"/>
        <end position="1108"/>
    </location>
</feature>
<reference key="1">
    <citation type="journal article" date="2000" name="Mol. Biol. Evol.">
        <title>The phytochrome gene family in tomato and the rapid differential evolution of this family in angiosperms.</title>
        <authorList>
            <person name="Alba R."/>
            <person name="Kelmenson P.M."/>
            <person name="Cordonnier-Pratt M.-M."/>
            <person name="Pratt L.H."/>
        </authorList>
    </citation>
    <scope>NUCLEOTIDE SEQUENCE [GENOMIC DNA]</scope>
</reference>
<reference key="2">
    <citation type="journal article" date="2004" name="Mol. Biol. Evol.">
        <title>Molecular evolution of the phytochrome gene family in sorghum: changing rates of synonymous and replacement evolution.</title>
        <authorList>
            <person name="White G.M."/>
            <person name="Hamblin M.T."/>
            <person name="Kresovich S."/>
        </authorList>
    </citation>
    <scope>NUCLEOTIDE SEQUENCE [GENOMIC DNA]</scope>
</reference>
<reference key="3">
    <citation type="journal article" date="2009" name="Nature">
        <title>The Sorghum bicolor genome and the diversification of grasses.</title>
        <authorList>
            <person name="Paterson A.H."/>
            <person name="Bowers J.E."/>
            <person name="Bruggmann R."/>
            <person name="Dubchak I."/>
            <person name="Grimwood J."/>
            <person name="Gundlach H."/>
            <person name="Haberer G."/>
            <person name="Hellsten U."/>
            <person name="Mitros T."/>
            <person name="Poliakov A."/>
            <person name="Schmutz J."/>
            <person name="Spannagl M."/>
            <person name="Tang H."/>
            <person name="Wang X."/>
            <person name="Wicker T."/>
            <person name="Bharti A.K."/>
            <person name="Chapman J."/>
            <person name="Feltus F.A."/>
            <person name="Gowik U."/>
            <person name="Grigoriev I.V."/>
            <person name="Lyons E."/>
            <person name="Maher C.A."/>
            <person name="Martis M."/>
            <person name="Narechania A."/>
            <person name="Otillar R.P."/>
            <person name="Penning B.W."/>
            <person name="Salamov A.A."/>
            <person name="Wang Y."/>
            <person name="Zhang L."/>
            <person name="Carpita N.C."/>
            <person name="Freeling M."/>
            <person name="Gingle A.R."/>
            <person name="Hash C.T."/>
            <person name="Keller B."/>
            <person name="Klein P."/>
            <person name="Kresovich S."/>
            <person name="McCann M.C."/>
            <person name="Ming R."/>
            <person name="Peterson D.G."/>
            <person name="Mehboob-ur-Rahman M."/>
            <person name="Ware D."/>
            <person name="Westhoff P."/>
            <person name="Mayer K.F.X."/>
            <person name="Messing J."/>
            <person name="Rokhsar D.S."/>
        </authorList>
    </citation>
    <scope>NUCLEOTIDE SEQUENCE [LARGE SCALE GENOMIC DNA]</scope>
    <source>
        <strain>cv. BTx623</strain>
    </source>
</reference>
<reference key="4">
    <citation type="journal article" date="2018" name="Plant J.">
        <title>The Sorghum bicolor reference genome: improved assembly, gene annotations, a transcriptome atlas, and signatures of genome organization.</title>
        <authorList>
            <person name="McCormick R.F."/>
            <person name="Truong S.K."/>
            <person name="Sreedasyam A."/>
            <person name="Jenkins J."/>
            <person name="Shu S."/>
            <person name="Sims D."/>
            <person name="Kennedy M."/>
            <person name="Amirebrahimi M."/>
            <person name="Weers B.D."/>
            <person name="McKinley B."/>
            <person name="Mattison A."/>
            <person name="Morishige D.T."/>
            <person name="Grimwood J."/>
            <person name="Schmutz J."/>
            <person name="Mullet J.E."/>
        </authorList>
    </citation>
    <scope>GENOME REANNOTATION</scope>
    <source>
        <strain>cv. BTx623</strain>
    </source>
</reference>
<reference key="5">
    <citation type="journal article" date="1997" name="Plant Physiol.">
        <title>The Sorghum bicolor photoperiod sensitivity gene, Ma3, encodes a phytochrome B.</title>
        <authorList>
            <person name="Childs K.L."/>
            <person name="Miller F.R."/>
            <person name="Cordonnier-Pratt M.-M."/>
            <person name="Pratt L.H."/>
            <person name="Morgan P.W."/>
            <person name="Mullet J.E."/>
        </authorList>
    </citation>
    <scope>NUCLEOTIDE SEQUENCE [GENOMIC DNA] OF 208-1178</scope>
    <source>
        <strain>cv. 58M</strain>
    </source>
</reference>
<reference key="6">
    <citation type="journal article" date="2017" name="FEBS Lett.">
        <title>Structural communication between the chromophore-binding pocket and the N-terminal extension in plant phytochrome phyB.</title>
        <authorList>
            <person name="Velazquez Escobar F."/>
            <person name="Buhrke D."/>
            <person name="Fernandez Lopez M."/>
            <person name="Shenkutie S.M."/>
            <person name="von Horsten S."/>
            <person name="Essen L.O."/>
            <person name="Hughes J."/>
            <person name="Hildebrandt P."/>
        </authorList>
    </citation>
    <scope>COMPLEX WITH PHYTOCHROMOBILIN</scope>
</reference>
<reference key="7">
    <citation type="journal article" date="2020" name="Nat. Plants">
        <title>Structural insights into photoactivation and signalling in plant phytochromes.</title>
        <authorList>
            <person name="Nagano S."/>
            <person name="Guan K."/>
            <person name="Shenkutie S.M."/>
            <person name="Feiler C."/>
            <person name="Weiss M."/>
            <person name="Kraskov A."/>
            <person name="Buhrke D."/>
            <person name="Hildebrandt P."/>
            <person name="Hughes J."/>
        </authorList>
    </citation>
    <scope>X-RAY CRYSTALLOGRAPHY (1.80 ANGSTROMS) OF 113-459 IN COMPLEX WITH PHYCOCYANOBILIN AND PHYTOCHROMOBILIN</scope>
</reference>
<comment type="function">
    <text evidence="1">Regulatory photoreceptor which exists in two forms that are reversibly interconvertible by light: the Pr form that absorbs maximally in the red region of the spectrum and the Pfr form that absorbs maximally in the far-red region. Photoconversion of Pr to Pfr induces an array of morphogenic responses, whereas reconversion of Pfr to Pr cancels the induction of those responses. Pfr controls the expression of a number of nuclear genes including those encoding the small subunit of ribulose-bisphosphate carboxylase, chlorophyll A/B binding protein, protochlorophyllide reductase, rRNA, etc. It also controls the expression of its own gene(s) in a negative feedback fashion.</text>
</comment>
<comment type="subunit">
    <text evidence="1">Homodimer.</text>
</comment>
<comment type="PTM">
    <text evidence="5 6">Contains one covalently linked phytochromobilin chromophore.</text>
</comment>
<comment type="similarity">
    <text evidence="7">Belongs to the phytochrome family.</text>
</comment>
<dbReference type="EMBL" id="AF182394">
    <property type="protein sequence ID" value="AAB41398.2"/>
    <property type="molecule type" value="Genomic_DNA"/>
</dbReference>
<dbReference type="EMBL" id="AY466084">
    <property type="protein sequence ID" value="AAR30900.1"/>
    <property type="molecule type" value="Genomic_DNA"/>
</dbReference>
<dbReference type="EMBL" id="AY466085">
    <property type="protein sequence ID" value="AAR30901.1"/>
    <property type="molecule type" value="Genomic_DNA"/>
</dbReference>
<dbReference type="EMBL" id="AY466086">
    <property type="protein sequence ID" value="AAR30902.1"/>
    <property type="molecule type" value="Genomic_DNA"/>
</dbReference>
<dbReference type="EMBL" id="AY466088">
    <property type="protein sequence ID" value="AAR30904.1"/>
    <property type="molecule type" value="Genomic_DNA"/>
</dbReference>
<dbReference type="EMBL" id="CM000760">
    <property type="protein sequence ID" value="EER94971.1"/>
    <property type="molecule type" value="Genomic_DNA"/>
</dbReference>
<dbReference type="PIR" id="T14802">
    <property type="entry name" value="T14802"/>
</dbReference>
<dbReference type="RefSeq" id="XP_002467973.1">
    <property type="nucleotide sequence ID" value="XM_002467928.1"/>
</dbReference>
<dbReference type="PDB" id="6TBY">
    <property type="method" value="X-ray"/>
    <property type="resolution" value="1.80 A"/>
    <property type="chains" value="AAA=113-451"/>
</dbReference>
<dbReference type="PDB" id="6TC5">
    <property type="method" value="X-ray"/>
    <property type="resolution" value="2.10 A"/>
    <property type="chains" value="AAA=113-459"/>
</dbReference>
<dbReference type="PDBsum" id="6TBY"/>
<dbReference type="PDBsum" id="6TC5"/>
<dbReference type="SMR" id="P93527"/>
<dbReference type="FunCoup" id="P93527">
    <property type="interactions" value="484"/>
</dbReference>
<dbReference type="STRING" id="4558.Q6S527"/>
<dbReference type="EnsemblPlants" id="EER94971">
    <property type="protein sequence ID" value="EER94971"/>
    <property type="gene ID" value="SORBI_3001G394400"/>
</dbReference>
<dbReference type="GeneID" id="8081072"/>
<dbReference type="Gramene" id="EER94971">
    <property type="protein sequence ID" value="EER94971"/>
    <property type="gene ID" value="SORBI_3001G394400"/>
</dbReference>
<dbReference type="KEGG" id="sbi:8081072"/>
<dbReference type="eggNOG" id="ENOG502QRNS">
    <property type="taxonomic scope" value="Eukaryota"/>
</dbReference>
<dbReference type="HOGENOM" id="CLU_010418_0_0_1"/>
<dbReference type="InParanoid" id="P93527"/>
<dbReference type="OMA" id="DDNTCCS"/>
<dbReference type="OrthoDB" id="2015534at2759"/>
<dbReference type="Proteomes" id="UP000000768">
    <property type="component" value="Chromosome 1"/>
</dbReference>
<dbReference type="ExpressionAtlas" id="P93527">
    <property type="expression patterns" value="baseline and differential"/>
</dbReference>
<dbReference type="GO" id="GO:0005634">
    <property type="term" value="C:nucleus"/>
    <property type="evidence" value="ECO:0000318"/>
    <property type="project" value="GO_Central"/>
</dbReference>
<dbReference type="GO" id="GO:0000155">
    <property type="term" value="F:phosphorelay sensor kinase activity"/>
    <property type="evidence" value="ECO:0007669"/>
    <property type="project" value="InterPro"/>
</dbReference>
<dbReference type="GO" id="GO:0009881">
    <property type="term" value="F:photoreceptor activity"/>
    <property type="evidence" value="ECO:0007669"/>
    <property type="project" value="UniProtKB-KW"/>
</dbReference>
<dbReference type="GO" id="GO:0042803">
    <property type="term" value="F:protein homodimerization activity"/>
    <property type="evidence" value="ECO:0007669"/>
    <property type="project" value="InterPro"/>
</dbReference>
<dbReference type="GO" id="GO:0009584">
    <property type="term" value="P:detection of visible light"/>
    <property type="evidence" value="ECO:0007669"/>
    <property type="project" value="InterPro"/>
</dbReference>
<dbReference type="GO" id="GO:0017012">
    <property type="term" value="P:protein-phytochromobilin linkage"/>
    <property type="evidence" value="ECO:0000314"/>
    <property type="project" value="UniProtKB"/>
</dbReference>
<dbReference type="GO" id="GO:0009585">
    <property type="term" value="P:red, far-red light phototransduction"/>
    <property type="evidence" value="ECO:0007669"/>
    <property type="project" value="UniProtKB-KW"/>
</dbReference>
<dbReference type="GO" id="GO:0006355">
    <property type="term" value="P:regulation of DNA-templated transcription"/>
    <property type="evidence" value="ECO:0007669"/>
    <property type="project" value="InterPro"/>
</dbReference>
<dbReference type="CDD" id="cd00082">
    <property type="entry name" value="HisKA"/>
    <property type="match status" value="1"/>
</dbReference>
<dbReference type="CDD" id="cd00130">
    <property type="entry name" value="PAS"/>
    <property type="match status" value="2"/>
</dbReference>
<dbReference type="FunFam" id="1.10.287.130:FF:000029">
    <property type="entry name" value="Phytochrome"/>
    <property type="match status" value="1"/>
</dbReference>
<dbReference type="FunFam" id="3.30.450.20:FF:000034">
    <property type="entry name" value="Phytochrome"/>
    <property type="match status" value="1"/>
</dbReference>
<dbReference type="FunFam" id="3.30.450.20:FF:000039">
    <property type="entry name" value="Phytochrome"/>
    <property type="match status" value="1"/>
</dbReference>
<dbReference type="FunFam" id="3.30.450.270:FF:000001">
    <property type="entry name" value="Phytochrome"/>
    <property type="match status" value="1"/>
</dbReference>
<dbReference type="FunFam" id="3.30.565.10:FF:000044">
    <property type="entry name" value="Phytochrome"/>
    <property type="match status" value="1"/>
</dbReference>
<dbReference type="Gene3D" id="1.10.287.130">
    <property type="match status" value="1"/>
</dbReference>
<dbReference type="Gene3D" id="3.30.450.270">
    <property type="match status" value="1"/>
</dbReference>
<dbReference type="Gene3D" id="3.30.450.40">
    <property type="match status" value="1"/>
</dbReference>
<dbReference type="Gene3D" id="3.30.565.10">
    <property type="entry name" value="Histidine kinase-like ATPase, C-terminal domain"/>
    <property type="match status" value="1"/>
</dbReference>
<dbReference type="Gene3D" id="3.30.450.20">
    <property type="entry name" value="PAS domain"/>
    <property type="match status" value="3"/>
</dbReference>
<dbReference type="InterPro" id="IPR003018">
    <property type="entry name" value="GAF"/>
</dbReference>
<dbReference type="InterPro" id="IPR029016">
    <property type="entry name" value="GAF-like_dom_sf"/>
</dbReference>
<dbReference type="InterPro" id="IPR036890">
    <property type="entry name" value="HATPase_C_sf"/>
</dbReference>
<dbReference type="InterPro" id="IPR005467">
    <property type="entry name" value="His_kinase_dom"/>
</dbReference>
<dbReference type="InterPro" id="IPR003661">
    <property type="entry name" value="HisK_dim/P_dom"/>
</dbReference>
<dbReference type="InterPro" id="IPR036097">
    <property type="entry name" value="HisK_dim/P_sf"/>
</dbReference>
<dbReference type="InterPro" id="IPR000014">
    <property type="entry name" value="PAS"/>
</dbReference>
<dbReference type="InterPro" id="IPR035965">
    <property type="entry name" value="PAS-like_dom_sf"/>
</dbReference>
<dbReference type="InterPro" id="IPR013654">
    <property type="entry name" value="PAS_2"/>
</dbReference>
<dbReference type="InterPro" id="IPR013767">
    <property type="entry name" value="PAS_fold"/>
</dbReference>
<dbReference type="InterPro" id="IPR016132">
    <property type="entry name" value="Phyto_chromo_attachment"/>
</dbReference>
<dbReference type="InterPro" id="IPR013516">
    <property type="entry name" value="Phyto_chromo_BS"/>
</dbReference>
<dbReference type="InterPro" id="IPR001294">
    <property type="entry name" value="Phytochrome"/>
</dbReference>
<dbReference type="InterPro" id="IPR012129">
    <property type="entry name" value="Phytochrome_A-E"/>
</dbReference>
<dbReference type="InterPro" id="IPR013515">
    <property type="entry name" value="Phytochrome_cen-reg"/>
</dbReference>
<dbReference type="InterPro" id="IPR043150">
    <property type="entry name" value="Phytochrome_PHY_sf"/>
</dbReference>
<dbReference type="NCBIfam" id="TIGR00229">
    <property type="entry name" value="sensory_box"/>
    <property type="match status" value="1"/>
</dbReference>
<dbReference type="PANTHER" id="PTHR47876">
    <property type="entry name" value="OS08G0260000 PROTEIN"/>
    <property type="match status" value="1"/>
</dbReference>
<dbReference type="PANTHER" id="PTHR47876:SF3">
    <property type="entry name" value="PHYTOCHROME 1"/>
    <property type="match status" value="1"/>
</dbReference>
<dbReference type="Pfam" id="PF01590">
    <property type="entry name" value="GAF"/>
    <property type="match status" value="1"/>
</dbReference>
<dbReference type="Pfam" id="PF02518">
    <property type="entry name" value="HATPase_c"/>
    <property type="match status" value="1"/>
</dbReference>
<dbReference type="Pfam" id="PF00512">
    <property type="entry name" value="HisKA"/>
    <property type="match status" value="1"/>
</dbReference>
<dbReference type="Pfam" id="PF00989">
    <property type="entry name" value="PAS"/>
    <property type="match status" value="2"/>
</dbReference>
<dbReference type="Pfam" id="PF08446">
    <property type="entry name" value="PAS_2"/>
    <property type="match status" value="1"/>
</dbReference>
<dbReference type="Pfam" id="PF00360">
    <property type="entry name" value="PHY"/>
    <property type="match status" value="1"/>
</dbReference>
<dbReference type="PIRSF" id="PIRSF000084">
    <property type="entry name" value="Phytochrome"/>
    <property type="match status" value="1"/>
</dbReference>
<dbReference type="PRINTS" id="PR01033">
    <property type="entry name" value="PHYTOCHROME"/>
</dbReference>
<dbReference type="SMART" id="SM00065">
    <property type="entry name" value="GAF"/>
    <property type="match status" value="1"/>
</dbReference>
<dbReference type="SMART" id="SM00387">
    <property type="entry name" value="HATPase_c"/>
    <property type="match status" value="1"/>
</dbReference>
<dbReference type="SMART" id="SM00388">
    <property type="entry name" value="HisKA"/>
    <property type="match status" value="1"/>
</dbReference>
<dbReference type="SMART" id="SM00091">
    <property type="entry name" value="PAS"/>
    <property type="match status" value="2"/>
</dbReference>
<dbReference type="SUPFAM" id="SSF55874">
    <property type="entry name" value="ATPase domain of HSP90 chaperone/DNA topoisomerase II/histidine kinase"/>
    <property type="match status" value="1"/>
</dbReference>
<dbReference type="SUPFAM" id="SSF55781">
    <property type="entry name" value="GAF domain-like"/>
    <property type="match status" value="2"/>
</dbReference>
<dbReference type="SUPFAM" id="SSF47384">
    <property type="entry name" value="Homodimeric domain of signal transducing histidine kinase"/>
    <property type="match status" value="1"/>
</dbReference>
<dbReference type="SUPFAM" id="SSF55785">
    <property type="entry name" value="PYP-like sensor domain (PAS domain)"/>
    <property type="match status" value="3"/>
</dbReference>
<dbReference type="PROSITE" id="PS50109">
    <property type="entry name" value="HIS_KIN"/>
    <property type="match status" value="1"/>
</dbReference>
<dbReference type="PROSITE" id="PS50112">
    <property type="entry name" value="PAS"/>
    <property type="match status" value="2"/>
</dbReference>
<dbReference type="PROSITE" id="PS00245">
    <property type="entry name" value="PHYTOCHROME_1"/>
    <property type="match status" value="1"/>
</dbReference>
<dbReference type="PROSITE" id="PS50046">
    <property type="entry name" value="PHYTOCHROME_2"/>
    <property type="match status" value="1"/>
</dbReference>
<organism>
    <name type="scientific">Sorghum bicolor</name>
    <name type="common">Sorghum</name>
    <name type="synonym">Sorghum vulgare</name>
    <dbReference type="NCBI Taxonomy" id="4558"/>
    <lineage>
        <taxon>Eukaryota</taxon>
        <taxon>Viridiplantae</taxon>
        <taxon>Streptophyta</taxon>
        <taxon>Embryophyta</taxon>
        <taxon>Tracheophyta</taxon>
        <taxon>Spermatophyta</taxon>
        <taxon>Magnoliopsida</taxon>
        <taxon>Liliopsida</taxon>
        <taxon>Poales</taxon>
        <taxon>Poaceae</taxon>
        <taxon>PACMAD clade</taxon>
        <taxon>Panicoideae</taxon>
        <taxon>Andropogonodae</taxon>
        <taxon>Andropogoneae</taxon>
        <taxon>Sorghinae</taxon>
        <taxon>Sorghum</taxon>
    </lineage>
</organism>
<proteinExistence type="evidence at protein level"/>
<evidence type="ECO:0000250" key="1">
    <source>
        <dbReference type="UniProtKB" id="P14713"/>
    </source>
</evidence>
<evidence type="ECO:0000255" key="2">
    <source>
        <dbReference type="PROSITE-ProRule" id="PRU00107"/>
    </source>
</evidence>
<evidence type="ECO:0000255" key="3">
    <source>
        <dbReference type="PROSITE-ProRule" id="PRU00140"/>
    </source>
</evidence>
<evidence type="ECO:0000256" key="4">
    <source>
        <dbReference type="SAM" id="MobiDB-lite"/>
    </source>
</evidence>
<evidence type="ECO:0000269" key="5">
    <source>
    </source>
</evidence>
<evidence type="ECO:0000269" key="6">
    <source>
    </source>
</evidence>
<evidence type="ECO:0000305" key="7"/>
<evidence type="ECO:0000312" key="8">
    <source>
        <dbReference type="EMBL" id="EER94971.1"/>
    </source>
</evidence>
<evidence type="ECO:0007744" key="9">
    <source>
        <dbReference type="PDB" id="6TC5"/>
    </source>
</evidence>
<keyword id="KW-0002">3D-structure</keyword>
<keyword id="KW-0157">Chromophore</keyword>
<keyword id="KW-0600">Photoreceptor protein</keyword>
<keyword id="KW-0607">Phytochrome signaling pathway</keyword>
<keyword id="KW-0675">Receptor</keyword>
<keyword id="KW-1185">Reference proteome</keyword>
<keyword id="KW-0677">Repeat</keyword>
<keyword id="KW-0716">Sensory transduction</keyword>
<keyword id="KW-0804">Transcription</keyword>
<keyword id="KW-0805">Transcription regulation</keyword>
<protein>
    <recommendedName>
        <fullName>Phytochrome B</fullName>
    </recommendedName>
</protein>
<sequence>MASGSRATPTRSPSSARPEAPRHAHHHHHHHSQSSGGSTSRAGGGGGGGGGGGGTAATATATATESVSKAVAQYTLDARLHAVFEQSGASGRSFDYSQSLRAPPTPSSEQQIAAYLSRIQRGGHIQPFGCTLAVADDSSFRLLAFSENAADLLDLSPHHSVPSLDSAAPPPVSLGADARLLFSPSSAVLLERAFAAREISLLNPLWIHSRVSSKPFYAILHRIDVGVVIDLEPARTEDPALSIAGAVQSQKLAVRAISRLQALPGGDIKLLCDTVVEHVRELTGYDRVMVYRFHEDEHGEVVAESRRDNLEPYLGLHYPATDIPQASRFLFRQNRVRMIADCHATPVRVIQDPGMSQPLCLVGSTLRAPHGCHAQYMANMGSIASLVMAVIISSGGDDEQTGRGGISSAMKLWGLVVCHHTSPRCIPFPLRYACEFLMQAFGLQLNMELQLAHQLSEKHILRTQTLLCDMLLRDSPTGIVTQSPSIMDLVKCDGAALYYHGKYYPLGVTPTESQIKDIIEWLTVCHGDSTGLSTDSLADAGYLGAAALGDAVCGMAVAYITPSDYLFWFRSHTAKEIKWGGAKHHPEDKDDGQRMHPRSSFKAFLEVVKSRSLPWENAEMDAIHSLQLILRDSFRDAAEGTSNSKAIVNGQVQLGELELRGINELSSVAREMVRLIETATVPIFAVDTDGCINGWNAKIAELTGLSVEEAMGKSLVNDLIFKESEEIVEKLLSRALRGEEDKNVEIKLKTFGSEQSNGAIFVIVNACSSRDYTQNIVGVCFVGQDVTGQKVVMDKFINIQGDYKAIVHNPNPLIPPIFASDENTSCSEWNTAMEKLTGWSRGEVVGKFLIGEVFGSFCRLKGPDALTKFMVVIHNAIGGQDYEKFPFSFFDKNGKYVQALLTANTRSKMDGKSIGAFCFLQIASAEIQQAFEIQRQQEKKCYARMKELAYICQEIKNPLSGIRFTNSLLQMTDLNDDQRQFLETCSACEKQMSKIVKDATLQSIEDGSLVLEKSEFSFGDVMNAVVSQAMLLLRERDLQLIRDIPDEIKDASAYGDQFRIQQVLADFLLSMVRSAPSENGWVEIQVRPNVKQNSDGTDTELFIFRFACPGEGLPADIVQDMFSNSQWSTQEGVGLSTCRKILKLMGGEVQYIRESERSFFLIVLELPQPRPAADREIS</sequence>